<sequence length="230" mass="24984">MLERAPVVTVDGPSGAGKGTISQLLAEKLGYKLLDSGAIYRVLALAAIHHNVELDNEESLTLLAAHLDVQFITGNESKGIKVVLEGEDVSTTIRSQECSNAASKVAAFPRVREALLRRQRAFAEAPGLIADGRDMGTVVFPATPAKLFLTASAEERAQRRYNQLQDNGFDVKIDQLLSEIKERDDRDMNRSVAPLVPAEDALVIDTTNISIEDVLAMALTHIHKSFQVPA</sequence>
<accession>B8CMH3</accession>
<feature type="chain" id="PRO_1000119027" description="Cytidylate kinase">
    <location>
        <begin position="1"/>
        <end position="230"/>
    </location>
</feature>
<feature type="binding site" evidence="1">
    <location>
        <begin position="12"/>
        <end position="20"/>
    </location>
    <ligand>
        <name>ATP</name>
        <dbReference type="ChEBI" id="CHEBI:30616"/>
    </ligand>
</feature>
<keyword id="KW-0067">ATP-binding</keyword>
<keyword id="KW-0963">Cytoplasm</keyword>
<keyword id="KW-0418">Kinase</keyword>
<keyword id="KW-0547">Nucleotide-binding</keyword>
<keyword id="KW-0808">Transferase</keyword>
<proteinExistence type="inferred from homology"/>
<dbReference type="EC" id="2.7.4.25" evidence="1"/>
<dbReference type="EMBL" id="CP000472">
    <property type="protein sequence ID" value="ACJ29230.1"/>
    <property type="molecule type" value="Genomic_DNA"/>
</dbReference>
<dbReference type="RefSeq" id="WP_020912588.1">
    <property type="nucleotide sequence ID" value="NC_011566.1"/>
</dbReference>
<dbReference type="SMR" id="B8CMH3"/>
<dbReference type="STRING" id="225849.swp_2489"/>
<dbReference type="KEGG" id="swp:swp_2489"/>
<dbReference type="eggNOG" id="COG0283">
    <property type="taxonomic scope" value="Bacteria"/>
</dbReference>
<dbReference type="HOGENOM" id="CLU_079959_2_0_6"/>
<dbReference type="OrthoDB" id="9807434at2"/>
<dbReference type="Proteomes" id="UP000000753">
    <property type="component" value="Chromosome"/>
</dbReference>
<dbReference type="GO" id="GO:0005829">
    <property type="term" value="C:cytosol"/>
    <property type="evidence" value="ECO:0007669"/>
    <property type="project" value="TreeGrafter"/>
</dbReference>
<dbReference type="GO" id="GO:0005524">
    <property type="term" value="F:ATP binding"/>
    <property type="evidence" value="ECO:0007669"/>
    <property type="project" value="UniProtKB-UniRule"/>
</dbReference>
<dbReference type="GO" id="GO:0036430">
    <property type="term" value="F:CMP kinase activity"/>
    <property type="evidence" value="ECO:0007669"/>
    <property type="project" value="RHEA"/>
</dbReference>
<dbReference type="GO" id="GO:0036431">
    <property type="term" value="F:dCMP kinase activity"/>
    <property type="evidence" value="ECO:0007669"/>
    <property type="project" value="RHEA"/>
</dbReference>
<dbReference type="GO" id="GO:0015949">
    <property type="term" value="P:nucleobase-containing small molecule interconversion"/>
    <property type="evidence" value="ECO:0007669"/>
    <property type="project" value="TreeGrafter"/>
</dbReference>
<dbReference type="GO" id="GO:0006220">
    <property type="term" value="P:pyrimidine nucleotide metabolic process"/>
    <property type="evidence" value="ECO:0007669"/>
    <property type="project" value="UniProtKB-UniRule"/>
</dbReference>
<dbReference type="CDD" id="cd02020">
    <property type="entry name" value="CMPK"/>
    <property type="match status" value="1"/>
</dbReference>
<dbReference type="FunFam" id="3.40.50.300:FF:000262">
    <property type="entry name" value="Cytidylate kinase"/>
    <property type="match status" value="1"/>
</dbReference>
<dbReference type="Gene3D" id="3.40.50.300">
    <property type="entry name" value="P-loop containing nucleotide triphosphate hydrolases"/>
    <property type="match status" value="1"/>
</dbReference>
<dbReference type="HAMAP" id="MF_00238">
    <property type="entry name" value="Cytidyl_kinase_type1"/>
    <property type="match status" value="1"/>
</dbReference>
<dbReference type="InterPro" id="IPR003136">
    <property type="entry name" value="Cytidylate_kin"/>
</dbReference>
<dbReference type="InterPro" id="IPR011994">
    <property type="entry name" value="Cytidylate_kinase_dom"/>
</dbReference>
<dbReference type="InterPro" id="IPR027417">
    <property type="entry name" value="P-loop_NTPase"/>
</dbReference>
<dbReference type="NCBIfam" id="TIGR00017">
    <property type="entry name" value="cmk"/>
    <property type="match status" value="1"/>
</dbReference>
<dbReference type="PANTHER" id="PTHR21299:SF2">
    <property type="entry name" value="CYTIDYLATE KINASE"/>
    <property type="match status" value="1"/>
</dbReference>
<dbReference type="PANTHER" id="PTHR21299">
    <property type="entry name" value="CYTIDYLATE KINASE/PANTOATE-BETA-ALANINE LIGASE"/>
    <property type="match status" value="1"/>
</dbReference>
<dbReference type="Pfam" id="PF02224">
    <property type="entry name" value="Cytidylate_kin"/>
    <property type="match status" value="1"/>
</dbReference>
<dbReference type="SUPFAM" id="SSF52540">
    <property type="entry name" value="P-loop containing nucleoside triphosphate hydrolases"/>
    <property type="match status" value="1"/>
</dbReference>
<gene>
    <name evidence="1" type="primary">cmk</name>
    <name type="ordered locus">swp_2489</name>
</gene>
<reference key="1">
    <citation type="journal article" date="2008" name="PLoS ONE">
        <title>Environmental adaptation: genomic analysis of the piezotolerant and psychrotolerant deep-sea iron reducing bacterium Shewanella piezotolerans WP3.</title>
        <authorList>
            <person name="Wang F."/>
            <person name="Wang J."/>
            <person name="Jian H."/>
            <person name="Zhang B."/>
            <person name="Li S."/>
            <person name="Wang F."/>
            <person name="Zeng X."/>
            <person name="Gao L."/>
            <person name="Bartlett D.H."/>
            <person name="Yu J."/>
            <person name="Hu S."/>
            <person name="Xiao X."/>
        </authorList>
    </citation>
    <scope>NUCLEOTIDE SEQUENCE [LARGE SCALE GENOMIC DNA]</scope>
    <source>
        <strain>WP3 / JCM 13877</strain>
    </source>
</reference>
<name>KCY_SHEPW</name>
<protein>
    <recommendedName>
        <fullName evidence="1">Cytidylate kinase</fullName>
        <shortName evidence="1">CK</shortName>
        <ecNumber evidence="1">2.7.4.25</ecNumber>
    </recommendedName>
    <alternativeName>
        <fullName evidence="1">Cytidine monophosphate kinase</fullName>
        <shortName evidence="1">CMP kinase</shortName>
    </alternativeName>
</protein>
<evidence type="ECO:0000255" key="1">
    <source>
        <dbReference type="HAMAP-Rule" id="MF_00238"/>
    </source>
</evidence>
<organism>
    <name type="scientific">Shewanella piezotolerans (strain WP3 / JCM 13877)</name>
    <dbReference type="NCBI Taxonomy" id="225849"/>
    <lineage>
        <taxon>Bacteria</taxon>
        <taxon>Pseudomonadati</taxon>
        <taxon>Pseudomonadota</taxon>
        <taxon>Gammaproteobacteria</taxon>
        <taxon>Alteromonadales</taxon>
        <taxon>Shewanellaceae</taxon>
        <taxon>Shewanella</taxon>
    </lineage>
</organism>
<comment type="catalytic activity">
    <reaction evidence="1">
        <text>CMP + ATP = CDP + ADP</text>
        <dbReference type="Rhea" id="RHEA:11600"/>
        <dbReference type="ChEBI" id="CHEBI:30616"/>
        <dbReference type="ChEBI" id="CHEBI:58069"/>
        <dbReference type="ChEBI" id="CHEBI:60377"/>
        <dbReference type="ChEBI" id="CHEBI:456216"/>
        <dbReference type="EC" id="2.7.4.25"/>
    </reaction>
</comment>
<comment type="catalytic activity">
    <reaction evidence="1">
        <text>dCMP + ATP = dCDP + ADP</text>
        <dbReference type="Rhea" id="RHEA:25094"/>
        <dbReference type="ChEBI" id="CHEBI:30616"/>
        <dbReference type="ChEBI" id="CHEBI:57566"/>
        <dbReference type="ChEBI" id="CHEBI:58593"/>
        <dbReference type="ChEBI" id="CHEBI:456216"/>
        <dbReference type="EC" id="2.7.4.25"/>
    </reaction>
</comment>
<comment type="subcellular location">
    <subcellularLocation>
        <location evidence="1">Cytoplasm</location>
    </subcellularLocation>
</comment>
<comment type="similarity">
    <text evidence="1">Belongs to the cytidylate kinase family. Type 1 subfamily.</text>
</comment>